<keyword id="KW-0325">Glycoprotein</keyword>
<keyword id="KW-1038">Host endoplasmic reticulum</keyword>
<keyword id="KW-1043">Host membrane</keyword>
<keyword id="KW-0472">Membrane</keyword>
<keyword id="KW-1185">Reference proteome</keyword>
<keyword id="KW-0964">Secreted</keyword>
<keyword id="KW-0732">Signal</keyword>
<keyword id="KW-0812">Transmembrane</keyword>
<keyword id="KW-1133">Transmembrane helix</keyword>
<keyword id="KW-0843">Virulence</keyword>
<dbReference type="EMBL" id="CCYD01000610">
    <property type="protein sequence ID" value="CEG42169.1"/>
    <property type="molecule type" value="Genomic_DNA"/>
</dbReference>
<dbReference type="SMR" id="A0A0P1AM89"/>
<dbReference type="GlyCosmos" id="A0A0P1AM89">
    <property type="glycosylation" value="1 site, No reported glycans"/>
</dbReference>
<dbReference type="EnsemblProtists" id="CEG42169">
    <property type="protein sequence ID" value="CEG42169"/>
    <property type="gene ID" value="CEG42169"/>
</dbReference>
<dbReference type="OrthoDB" id="126586at2759"/>
<dbReference type="Proteomes" id="UP000054928">
    <property type="component" value="Unassembled WGS sequence"/>
</dbReference>
<dbReference type="GO" id="GO:0005576">
    <property type="term" value="C:extracellular region"/>
    <property type="evidence" value="ECO:0007669"/>
    <property type="project" value="UniProtKB-SubCell"/>
</dbReference>
<dbReference type="GO" id="GO:0044167">
    <property type="term" value="C:host cell endoplasmic reticulum membrane"/>
    <property type="evidence" value="ECO:0007669"/>
    <property type="project" value="UniProtKB-SubCell"/>
</dbReference>
<dbReference type="GO" id="GO:0016020">
    <property type="term" value="C:membrane"/>
    <property type="evidence" value="ECO:0007669"/>
    <property type="project" value="UniProtKB-KW"/>
</dbReference>
<sequence>MVNSLTFTLVVVCLVRSCDGVAAVSSDMIDSTNNRISRNMIRRVLQETATANDDVKKLSTSTKVDSKLNQEIKTKPDQLVKAEKNSSKIGAWLKRMNVISSKRDKFFILATILLFPIAAYMVASR</sequence>
<name>RLR13_PLAHL</name>
<feature type="signal peptide" evidence="1">
    <location>
        <begin position="1"/>
        <end position="23"/>
    </location>
</feature>
<feature type="chain" id="PRO_5006058771" description="Secreted RxLR effector protein RXLR-C13">
    <location>
        <begin position="24"/>
        <end position="125"/>
    </location>
</feature>
<feature type="transmembrane region" description="Helical" evidence="1">
    <location>
        <begin position="106"/>
        <end position="123"/>
    </location>
</feature>
<feature type="short sequence motif" description="RxLR-dEER" evidence="6">
    <location>
        <begin position="43"/>
        <end position="73"/>
    </location>
</feature>
<feature type="glycosylation site" description="N-linked (GlcNAc...) asparagine" evidence="2">
    <location>
        <position position="85"/>
    </location>
</feature>
<protein>
    <recommendedName>
        <fullName evidence="4">Secreted RxLR effector protein RXLR-C13</fullName>
    </recommendedName>
</protein>
<accession>A0A0P1AM89</accession>
<proteinExistence type="evidence at transcript level"/>
<reference key="1">
    <citation type="journal article" date="2015" name="BMC Genomics">
        <title>Genome analyses of the sunflower pathogen Plasmopara halstedii provide insights into effector evolution in downy mildews and Phytophthora.</title>
        <authorList>
            <person name="Sharma R."/>
            <person name="Xia X."/>
            <person name="Cano L.M."/>
            <person name="Evangelisti E."/>
            <person name="Kemen E."/>
            <person name="Judelson H."/>
            <person name="Oome S."/>
            <person name="Sambles C."/>
            <person name="van den Hoogen D.J."/>
            <person name="Kitner M."/>
            <person name="Klein J."/>
            <person name="Meijer H.J."/>
            <person name="Spring O."/>
            <person name="Win J."/>
            <person name="Zipper R."/>
            <person name="Bode H.B."/>
            <person name="Govers F."/>
            <person name="Kamoun S."/>
            <person name="Schornack S."/>
            <person name="Studholme D.J."/>
            <person name="Van den Ackerveken G."/>
            <person name="Thines M."/>
        </authorList>
    </citation>
    <scope>NUCLEOTIDE SEQUENCE [LARGE SCALE GENOMIC DNA]</scope>
</reference>
<reference key="2">
    <citation type="journal article" date="2019" name="Plant J.">
        <title>Sunflower resistance to multiple downy mildew pathotypes revealed by recognition of conserved effectors of the oomycete Plasmopara halstedii.</title>
        <authorList>
            <person name="Pecrix Y."/>
            <person name="Buendia L."/>
            <person name="Penouilh-Suzette C."/>
            <person name="Marechaux M."/>
            <person name="Legrand L."/>
            <person name="Bouchez O."/>
            <person name="Rengel D."/>
            <person name="Gouzy J."/>
            <person name="Cottret L."/>
            <person name="Vear F."/>
            <person name="Godiard L."/>
        </authorList>
    </citation>
    <scope>DOMAIN</scope>
    <scope>INDUCTION</scope>
    <scope>FUNCTION</scope>
    <scope>SUBCELLULAR LOCATION</scope>
</reference>
<organism>
    <name type="scientific">Plasmopara halstedii</name>
    <name type="common">Downy mildew of sunflower</name>
    <dbReference type="NCBI Taxonomy" id="4781"/>
    <lineage>
        <taxon>Eukaryota</taxon>
        <taxon>Sar</taxon>
        <taxon>Stramenopiles</taxon>
        <taxon>Oomycota</taxon>
        <taxon>Peronosporales</taxon>
        <taxon>Peronosporaceae</taxon>
        <taxon>Plasmopara</taxon>
    </lineage>
</organism>
<gene>
    <name evidence="4" type="primary">RXLR-C131</name>
</gene>
<evidence type="ECO:0000255" key="1"/>
<evidence type="ECO:0000255" key="2">
    <source>
        <dbReference type="PROSITE-ProRule" id="PRU00498"/>
    </source>
</evidence>
<evidence type="ECO:0000269" key="3">
    <source>
    </source>
</evidence>
<evidence type="ECO:0000303" key="4">
    <source>
    </source>
</evidence>
<evidence type="ECO:0000305" key="5"/>
<evidence type="ECO:0000305" key="6">
    <source>
    </source>
</evidence>
<comment type="function">
    <text evidence="3">Secreted effector that does not suppress pattern-triggered immunity (PTI) in plant host.</text>
</comment>
<comment type="subcellular location">
    <subcellularLocation>
        <location evidence="3">Secreted</location>
    </subcellularLocation>
    <subcellularLocation>
        <location evidence="3">Host endoplasmic reticulum membrane</location>
        <topology evidence="1">Single-pass membrane protein</topology>
    </subcellularLocation>
</comment>
<comment type="induction">
    <text evidence="3">Expression is up-regulated during the early plant infection stages.</text>
</comment>
<comment type="domain">
    <text evidence="6">Has the canonical translocation RxLR motif, but lacks the canonical EER motif, which characterizes most oomycete effectors identified so far.</text>
</comment>
<comment type="similarity">
    <text evidence="5">Belongs to the RxLR effector family.</text>
</comment>